<accession>Q0C899</accession>
<comment type="function">
    <text evidence="2 3 4 5 6">FAD-dependent monooxygenase; part of the gene cluster that mediates the biosynthesis of terretonin, a fungal meroterpenoid that acts as a mycotoxin (PubMed:22549923, PubMed:23116177, PubMed:25671343). The first step of the pathway is the synthesis of 3,5-dimethylorsellinic acid (DMOA) by the polyketide synthase trt4 (PubMed:22549923, PubMed:23116177). DMOA is then prenylated into farnesyl-DMOA by the polyprenyl transferase trt2 (PubMed:22549923, PubMed:22782788, PubMed:23116177). Methylation by the methyltransferase trt5 then leads to farnesyl-DMOA methyl ester which is further subject to epoxidation by the FAD-dependent monooxygenase trt8 to yield epoxyfarnesyl-DMOA methyl ester (PubMed:22549923, PubMed:22782788, PubMed:23116177). Cyclization of epoxyfarnesyl-DMOA methyl ester by the terpene cyclase trt1 leads to a tetracycle intermediate which is in turn converted to preterretonin (PubMed:22549923, PubMed:22782788, PubMed:23116177). Dehydrogenase trt9 comes next to transform preterretonin to preterrenoid (PubMed:22549923, PubMed:23116177). The FAD-dependent monooxygenase trt3 is then required for the C-hydroxylation at C16 of preterrenoid to yield terrenoid (PubMed:22549923, PubMed:23116177). The cytochrome P450 trt6 catalyzes three successive oxidations to transform terrenoid into an unstable intermediate, which then undergoes the D-ring expansion and unusual rearrangement of the methoxy group to afford the core skeleton of terretonin (PubMed:25671343, PubMed:28759016). Trt14 catalyzes the D-ring expansion of terretonin involving intramolecular methoxy rearrangement as well as the hydrolysis of the expanded D-ring and the methyl ester moiety (PubMed:25671343, PubMed:28759016). Finally, the nonheme iron-dependent dioxygenase trt7 accomplishes the last two oxidation reactions steps to complete the biosynthesis of terretonin (PubMed:25671343). Terretonin C is produced via spontaneous decarboxylation of the terretonin precursor (PubMed:23116177). Another shunt product of the terretonin biosynthesis is dihydrofarnesyl-DMOA, derived from epoxyfarnesyl-DMOA through hydrolysis of the epoxide (PubMed:22549923, PubMed:22782788, PubMed:23116177).</text>
</comment>
<comment type="cofactor">
    <cofactor evidence="8">
        <name>FAD</name>
        <dbReference type="ChEBI" id="CHEBI:57692"/>
    </cofactor>
</comment>
<comment type="pathway">
    <text evidence="4">Secondary metabolite biosynthesis; terpenoid biosynthesis.</text>
</comment>
<comment type="disruption phenotype">
    <text evidence="4">Impairs the synthesis of terretonin but accumulates dimethylorsellinate through the decomposition of an unstable intermediate (PubMed:23116177).</text>
</comment>
<comment type="similarity">
    <text evidence="8">Belongs to the paxM FAD-dependent monooxygenase family.</text>
</comment>
<keyword id="KW-0274">FAD</keyword>
<keyword id="KW-0285">Flavoprotein</keyword>
<keyword id="KW-0503">Monooxygenase</keyword>
<keyword id="KW-0521">NADP</keyword>
<keyword id="KW-0560">Oxidoreductase</keyword>
<keyword id="KW-1185">Reference proteome</keyword>
<proteinExistence type="evidence at protein level"/>
<organism>
    <name type="scientific">Aspergillus terreus (strain NIH 2624 / FGSC A1156)</name>
    <dbReference type="NCBI Taxonomy" id="341663"/>
    <lineage>
        <taxon>Eukaryota</taxon>
        <taxon>Fungi</taxon>
        <taxon>Dikarya</taxon>
        <taxon>Ascomycota</taxon>
        <taxon>Pezizomycotina</taxon>
        <taxon>Eurotiomycetes</taxon>
        <taxon>Eurotiomycetidae</taxon>
        <taxon>Eurotiales</taxon>
        <taxon>Aspergillaceae</taxon>
        <taxon>Aspergillus</taxon>
        <taxon>Aspergillus subgen. Circumdati</taxon>
    </lineage>
</organism>
<evidence type="ECO:0000250" key="1">
    <source>
        <dbReference type="UniProtKB" id="B8M9J8"/>
    </source>
</evidence>
<evidence type="ECO:0000269" key="2">
    <source>
    </source>
</evidence>
<evidence type="ECO:0000269" key="3">
    <source>
    </source>
</evidence>
<evidence type="ECO:0000269" key="4">
    <source>
    </source>
</evidence>
<evidence type="ECO:0000269" key="5">
    <source>
    </source>
</evidence>
<evidence type="ECO:0000269" key="6">
    <source>
    </source>
</evidence>
<evidence type="ECO:0000303" key="7">
    <source>
    </source>
</evidence>
<evidence type="ECO:0000305" key="8"/>
<feature type="chain" id="PRO_0000436597" description="FAD-dependent monooxygenase trt8">
    <location>
        <begin position="1"/>
        <end position="397"/>
    </location>
</feature>
<feature type="active site" evidence="1">
    <location>
        <position position="53"/>
    </location>
</feature>
<feature type="binding site" evidence="1">
    <location>
        <position position="145"/>
    </location>
    <ligand>
        <name>FAD</name>
        <dbReference type="ChEBI" id="CHEBI:57692"/>
    </ligand>
</feature>
<feature type="binding site" evidence="1">
    <location>
        <position position="158"/>
    </location>
    <ligand>
        <name>FAD</name>
        <dbReference type="ChEBI" id="CHEBI:57692"/>
    </ligand>
</feature>
<protein>
    <recommendedName>
        <fullName evidence="7">FAD-dependent monooxygenase trt8</fullName>
        <ecNumber evidence="2 3">1.-.-.-</ecNumber>
    </recommendedName>
    <alternativeName>
        <fullName evidence="7">Terretonin synthesis protein 8</fullName>
    </alternativeName>
</protein>
<gene>
    <name evidence="7" type="primary">trt8</name>
    <name type="ORF">ATEG_10085</name>
</gene>
<sequence>MSVYRLFTVSIMDMCVLKANCKDPLGFTVEYTCVFGISSPIPGLHGGEHVNSYGEGVCVITFHNKDGRVFWFIIEKLPKKYTYPISPRFTPQDASEFCGRLADVHVFNDVTVGHLWRNRTVVSMNALEEGLLSTWSFERMVLLGDSVHKMTPNIGQGANTAIEDAAALASLIHQMINPMTPQNASKAAIGHLFQKFQDLRMSRVQSTVQRAHFGARFHTRDDHLKALVGRYIFPYVGNLVMARTVKVIGGGHKIEFLPPPKRSMPWTAQTDHSQHKMHGSKVLWAYLSHPDQHWSDDPRGTAQLRSQSLGTHRTSTVGRTLFIELVIVMIDVVYARQDIGEDVNAGVKDMAVQSRNSMRFLPYVLSYGSTESLLAAGWRQVWVFRLLSYLFGALLGL</sequence>
<name>TRT8_ASPTN</name>
<reference key="1">
    <citation type="submission" date="2005-09" db="EMBL/GenBank/DDBJ databases">
        <title>Annotation of the Aspergillus terreus NIH2624 genome.</title>
        <authorList>
            <person name="Birren B.W."/>
            <person name="Lander E.S."/>
            <person name="Galagan J.E."/>
            <person name="Nusbaum C."/>
            <person name="Devon K."/>
            <person name="Henn M."/>
            <person name="Ma L.-J."/>
            <person name="Jaffe D.B."/>
            <person name="Butler J."/>
            <person name="Alvarez P."/>
            <person name="Gnerre S."/>
            <person name="Grabherr M."/>
            <person name="Kleber M."/>
            <person name="Mauceli E.W."/>
            <person name="Brockman W."/>
            <person name="Rounsley S."/>
            <person name="Young S.K."/>
            <person name="LaButti K."/>
            <person name="Pushparaj V."/>
            <person name="DeCaprio D."/>
            <person name="Crawford M."/>
            <person name="Koehrsen M."/>
            <person name="Engels R."/>
            <person name="Montgomery P."/>
            <person name="Pearson M."/>
            <person name="Howarth C."/>
            <person name="Larson L."/>
            <person name="Luoma S."/>
            <person name="White J."/>
            <person name="Alvarado L."/>
            <person name="Kodira C.D."/>
            <person name="Zeng Q."/>
            <person name="Oleary S."/>
            <person name="Yandava C."/>
            <person name="Denning D.W."/>
            <person name="Nierman W.C."/>
            <person name="Milne T."/>
            <person name="Madden K."/>
        </authorList>
    </citation>
    <scope>NUCLEOTIDE SEQUENCE [LARGE SCALE GENOMIC DNA]</scope>
    <source>
        <strain>NIH 2624 / FGSC A1156</strain>
    </source>
</reference>
<reference key="2">
    <citation type="journal article" date="2012" name="ChemBioChem">
        <title>Identification of a key prenyltransferase involved in biosynthesis of the most abundant fungal meroterpenoids derived from 3,5-dimethylorsellinic acid.</title>
        <authorList>
            <person name="Itoh T."/>
            <person name="Tokunaga K."/>
            <person name="Radhakrishnan E.K."/>
            <person name="Fujii I."/>
            <person name="Abe I."/>
            <person name="Ebizuka Y."/>
            <person name="Kushiro T."/>
        </authorList>
    </citation>
    <scope>FUNCTION</scope>
    <scope>CATALYTIC ACTIVITY</scope>
</reference>
<reference key="3">
    <citation type="journal article" date="2012" name="ChemBioChem">
        <title>Terretonin biosynthesis requires methylation as essential step for cyclization.</title>
        <authorList>
            <person name="Matsuda Y."/>
            <person name="Awakawa T."/>
            <person name="Itoh T."/>
            <person name="Wakimoto T."/>
            <person name="Kushiro T."/>
            <person name="Fujii I."/>
            <person name="Ebizuka Y."/>
            <person name="Abe I."/>
        </authorList>
    </citation>
    <scope>FUNCTION</scope>
    <scope>CATALYTIC ACTIVITY</scope>
</reference>
<reference key="4">
    <citation type="journal article" date="2012" name="Org. Lett.">
        <title>Molecular genetic characterization of a cluster in A. terreus for biosynthesis of the meroterpenoid terretonin.</title>
        <authorList>
            <person name="Guo C.J."/>
            <person name="Knox B.P."/>
            <person name="Chiang Y.M."/>
            <person name="Lo H.C."/>
            <person name="Sanchez J.F."/>
            <person name="Lee K.H."/>
            <person name="Oakley B.R."/>
            <person name="Bruno K.S."/>
            <person name="Wang C.C."/>
        </authorList>
    </citation>
    <scope>FUNCTION</scope>
    <scope>DISRUPTION PHENOTYPE</scope>
</reference>
<reference key="5">
    <citation type="journal article" date="2015" name="J. Am. Chem. Soc.">
        <title>Uncovering the unusual D-ring construction in terretonin biosynthesis by collaboration of a multifunctional cytochrome P450 and a unique isomerase.</title>
        <authorList>
            <person name="Matsuda Y."/>
            <person name="Iwabuchi T."/>
            <person name="Wakimoto T."/>
            <person name="Awakawa T."/>
            <person name="Abe I."/>
        </authorList>
    </citation>
    <scope>FUNCTION</scope>
</reference>
<reference key="6">
    <citation type="journal article" date="2017" name="Nat. Chem. Biol.">
        <title>Molecular basis for the unusual ring reconstruction in fungal meroterpenoid biogenesis.</title>
        <authorList>
            <person name="Mori T."/>
            <person name="Iwabuchi T."/>
            <person name="Hoshino S."/>
            <person name="Wang H."/>
            <person name="Matsuda Y."/>
            <person name="Abe I."/>
        </authorList>
    </citation>
    <scope>FUNCTION</scope>
</reference>
<dbReference type="EC" id="1.-.-.-" evidence="2 3"/>
<dbReference type="EMBL" id="CH476609">
    <property type="protein sequence ID" value="EAU29534.1"/>
    <property type="molecule type" value="Genomic_DNA"/>
</dbReference>
<dbReference type="RefSeq" id="XP_001209387.1">
    <property type="nucleotide sequence ID" value="XM_001209387.1"/>
</dbReference>
<dbReference type="SMR" id="Q0C899"/>
<dbReference type="STRING" id="341663.Q0C899"/>
<dbReference type="EnsemblFungi" id="EAU29534">
    <property type="protein sequence ID" value="EAU29534"/>
    <property type="gene ID" value="ATEG_10085"/>
</dbReference>
<dbReference type="GeneID" id="4319492"/>
<dbReference type="VEuPathDB" id="FungiDB:ATEG_10085"/>
<dbReference type="eggNOG" id="KOG2614">
    <property type="taxonomic scope" value="Eukaryota"/>
</dbReference>
<dbReference type="HOGENOM" id="CLU_694402_0_0_1"/>
<dbReference type="OrthoDB" id="10029326at2759"/>
<dbReference type="UniPathway" id="UPA00213"/>
<dbReference type="Proteomes" id="UP000007963">
    <property type="component" value="Unassembled WGS sequence"/>
</dbReference>
<dbReference type="GO" id="GO:0071949">
    <property type="term" value="F:FAD binding"/>
    <property type="evidence" value="ECO:0007669"/>
    <property type="project" value="InterPro"/>
</dbReference>
<dbReference type="GO" id="GO:0004497">
    <property type="term" value="F:monooxygenase activity"/>
    <property type="evidence" value="ECO:0007669"/>
    <property type="project" value="UniProtKB-KW"/>
</dbReference>
<dbReference type="GO" id="GO:0016114">
    <property type="term" value="P:terpenoid biosynthetic process"/>
    <property type="evidence" value="ECO:0007669"/>
    <property type="project" value="UniProtKB-UniPathway"/>
</dbReference>
<dbReference type="Gene3D" id="3.50.50.60">
    <property type="entry name" value="FAD/NAD(P)-binding domain"/>
    <property type="match status" value="1"/>
</dbReference>
<dbReference type="InterPro" id="IPR002938">
    <property type="entry name" value="FAD-bd"/>
</dbReference>
<dbReference type="InterPro" id="IPR036188">
    <property type="entry name" value="FAD/NAD-bd_sf"/>
</dbReference>
<dbReference type="InterPro" id="IPR050562">
    <property type="entry name" value="FAD_mOase_fung"/>
</dbReference>
<dbReference type="PANTHER" id="PTHR47356:SF2">
    <property type="entry name" value="FAD-BINDING DOMAIN-CONTAINING PROTEIN-RELATED"/>
    <property type="match status" value="1"/>
</dbReference>
<dbReference type="PANTHER" id="PTHR47356">
    <property type="entry name" value="FAD-DEPENDENT MONOOXYGENASE ASQG-RELATED"/>
    <property type="match status" value="1"/>
</dbReference>
<dbReference type="Pfam" id="PF01494">
    <property type="entry name" value="FAD_binding_3"/>
    <property type="match status" value="1"/>
</dbReference>
<dbReference type="PRINTS" id="PR00420">
    <property type="entry name" value="RNGMNOXGNASE"/>
</dbReference>
<dbReference type="SUPFAM" id="SSF51905">
    <property type="entry name" value="FAD/NAD(P)-binding domain"/>
    <property type="match status" value="1"/>
</dbReference>